<organism>
    <name type="scientific">Measles virus (strain Halle)</name>
    <name type="common">MeV</name>
    <name type="synonym">Subacute sclerose panencephalitis virus</name>
    <dbReference type="NCBI Taxonomy" id="11236"/>
    <lineage>
        <taxon>Viruses</taxon>
        <taxon>Riboviria</taxon>
        <taxon>Orthornavirae</taxon>
        <taxon>Negarnaviricota</taxon>
        <taxon>Haploviricotina</taxon>
        <taxon>Monjiviricetes</taxon>
        <taxon>Mononegavirales</taxon>
        <taxon>Paramyxoviridae</taxon>
        <taxon>Orthoparamyxovirinae</taxon>
        <taxon>Morbillivirus</taxon>
        <taxon>Morbillivirus hominis</taxon>
        <taxon>Measles morbillivirus</taxon>
    </lineage>
</organism>
<comment type="function">
    <text evidence="1">The M protein has a crucial role in virus assembly and interacts with the RNP complex as well as with the viral membrane. Associates with phosphatidylserine (PS) and phosphatidylinositol 4,5-bisphosphate (PIP2) at the plasma membrane. Interaction with PIP2 triggers matrix protein lattice polymerization. Matrix proteins induce host membrane deformation and curvature necessary for virion assembly/budding.</text>
</comment>
<comment type="subunit">
    <text evidence="1">Homodimer. Dimerization is critical for virion formation. Interacts with host ANP32B.</text>
</comment>
<comment type="subcellular location">
    <subcellularLocation>
        <location evidence="1">Virion</location>
    </subcellularLocation>
    <subcellularLocation>
        <location evidence="1">Host cell membrane</location>
    </subcellularLocation>
</comment>
<comment type="similarity">
    <text evidence="2">Belongs to the morbillivirus/respirovirus/rubulavirus M protein family.</text>
</comment>
<gene>
    <name type="primary">M</name>
</gene>
<keyword id="KW-1032">Host cell membrane</keyword>
<keyword id="KW-1043">Host membrane</keyword>
<keyword id="KW-0945">Host-virus interaction</keyword>
<keyword id="KW-0446">Lipid-binding</keyword>
<keyword id="KW-0472">Membrane</keyword>
<keyword id="KW-0261">Viral envelope protein</keyword>
<keyword id="KW-0468">Viral matrix protein</keyword>
<keyword id="KW-0946">Virion</keyword>
<feature type="chain" id="PRO_0000142753" description="Matrix protein">
    <location>
        <begin position="1"/>
        <end position="335"/>
    </location>
</feature>
<accession>P18611</accession>
<protein>
    <recommendedName>
        <fullName>Matrix protein</fullName>
    </recommendedName>
</protein>
<proteinExistence type="inferred from homology"/>
<reference key="1">
    <citation type="journal article" date="1990" name="Nucleic Acids Res.">
        <title>Cloning of the matrix gene of measles virus (Halle strain).</title>
        <authorList>
            <person name="Buckland R."/>
            <person name="Cheynet V."/>
            <person name="Beauverger P."/>
            <person name="Wild F."/>
        </authorList>
    </citation>
    <scope>NUCLEOTIDE SEQUENCE [GENOMIC RNA]</scope>
</reference>
<dbReference type="EMBL" id="X54068">
    <property type="protein sequence ID" value="CAA37999.1"/>
    <property type="molecule type" value="Genomic_RNA"/>
</dbReference>
<dbReference type="PIR" id="S11227">
    <property type="entry name" value="S11227"/>
</dbReference>
<dbReference type="SMR" id="P18611"/>
<dbReference type="GO" id="GO:0020002">
    <property type="term" value="C:host cell plasma membrane"/>
    <property type="evidence" value="ECO:0007669"/>
    <property type="project" value="UniProtKB-SubCell"/>
</dbReference>
<dbReference type="GO" id="GO:0016020">
    <property type="term" value="C:membrane"/>
    <property type="evidence" value="ECO:0007669"/>
    <property type="project" value="UniProtKB-KW"/>
</dbReference>
<dbReference type="GO" id="GO:0019031">
    <property type="term" value="C:viral envelope"/>
    <property type="evidence" value="ECO:0007669"/>
    <property type="project" value="UniProtKB-KW"/>
</dbReference>
<dbReference type="GO" id="GO:0008289">
    <property type="term" value="F:lipid binding"/>
    <property type="evidence" value="ECO:0007669"/>
    <property type="project" value="UniProtKB-KW"/>
</dbReference>
<dbReference type="GO" id="GO:0039660">
    <property type="term" value="F:structural constituent of virion"/>
    <property type="evidence" value="ECO:0007669"/>
    <property type="project" value="UniProtKB-KW"/>
</dbReference>
<dbReference type="GO" id="GO:0019068">
    <property type="term" value="P:virion assembly"/>
    <property type="evidence" value="ECO:0007669"/>
    <property type="project" value="InterPro"/>
</dbReference>
<dbReference type="FunFam" id="2.70.20.50:FF:000001">
    <property type="entry name" value="Matrix protein"/>
    <property type="match status" value="1"/>
</dbReference>
<dbReference type="FunFam" id="2.70.20.60:FF:000001">
    <property type="entry name" value="Matrix protein"/>
    <property type="match status" value="1"/>
</dbReference>
<dbReference type="Gene3D" id="2.70.20.60">
    <property type="entry name" value="Viral matrix protein, C-terminal domain"/>
    <property type="match status" value="1"/>
</dbReference>
<dbReference type="Gene3D" id="2.70.20.50">
    <property type="entry name" value="Viral matrix protein, N-terminal domain"/>
    <property type="match status" value="1"/>
</dbReference>
<dbReference type="InterPro" id="IPR042539">
    <property type="entry name" value="Matrix_C"/>
</dbReference>
<dbReference type="InterPro" id="IPR042540">
    <property type="entry name" value="Matrix_N"/>
</dbReference>
<dbReference type="InterPro" id="IPR055413">
    <property type="entry name" value="Matrix_Paramyxo_C"/>
</dbReference>
<dbReference type="InterPro" id="IPR000982">
    <property type="entry name" value="Matrix_Paramyxo_N"/>
</dbReference>
<dbReference type="Pfam" id="PF23765">
    <property type="entry name" value="Matrix_Paramyxo_C"/>
    <property type="match status" value="1"/>
</dbReference>
<dbReference type="Pfam" id="PF00661">
    <property type="entry name" value="Matrix_Paramyxo_N"/>
    <property type="match status" value="1"/>
</dbReference>
<evidence type="ECO:0000250" key="1">
    <source>
        <dbReference type="UniProtKB" id="Q9W850"/>
    </source>
</evidence>
<evidence type="ECO:0000305" key="2"/>
<name>MATRX_MEASH</name>
<sequence>MTEIYDFDKSAWDIKGPIAPIQPTTYSDGRLVPQVRVIDPGLGDRKDECSMYMFLLGVVEDSDPLGPPIGRAFGSLPLGVGRSTAKPEKLLKEATELDIVVRRTAGLNEKLVFYNNTPLTLLTPWRKVLTTGSVFNANQVCNAVNLIPLDTPQRFRVVYMSITRLSDNGYYTVPRRMLEFRSVNAVAFNLLVTLRIDKAIGPGKIIDNTEQLPEATFMVHIGNFRRKKSEVYSADYCKMKIEKMGLVFALGGIGGTSLHIRSTGKMSKTLHAQLGFKKTLCYPLMDINEDLNRLLWRSRCKIVRIQAVLQPSVPQEFRIYDDVIINDDQGLFKVL</sequence>
<organismHost>
    <name type="scientific">Homo sapiens</name>
    <name type="common">Human</name>
    <dbReference type="NCBI Taxonomy" id="9606"/>
</organismHost>